<feature type="chain" id="PRO_0000176377" description="Elongation factor 4">
    <location>
        <begin position="1"/>
        <end position="601"/>
    </location>
</feature>
<feature type="domain" description="tr-type G">
    <location>
        <begin position="7"/>
        <end position="189"/>
    </location>
</feature>
<feature type="binding site" evidence="1">
    <location>
        <begin position="19"/>
        <end position="24"/>
    </location>
    <ligand>
        <name>GTP</name>
        <dbReference type="ChEBI" id="CHEBI:37565"/>
    </ligand>
</feature>
<feature type="binding site" evidence="1">
    <location>
        <begin position="136"/>
        <end position="139"/>
    </location>
    <ligand>
        <name>GTP</name>
        <dbReference type="ChEBI" id="CHEBI:37565"/>
    </ligand>
</feature>
<proteinExistence type="inferred from homology"/>
<accession>Q8PMV3</accession>
<sequence>MSSDSMRNIRNFSIIAHVDHGKSTLADRIIQLCGGLQAREMEAQVLDSNPIERERGITIKAQSVSLPYTAKDGQTYHLNFIDTPGHVDFSYEVSRSLAACEGALLVVDAAQGVEAQSVANCYTAVEQGLEVVPVLNKIDLPTADVDRAKAEIEAVIGIDAEDAVAVSAKTGLNIDLVLEAIVHRIPPPKPRDTDKLQALIIDSWFDNYLGVVSLVRVMQGEIKPGSKILVMSTGRTHLVDKVGVFTPKRKELPALGAGEVGWINASIKDVHGAPVGDTLTLAGDPAPHALPGFQEMQPRVFAGLFPVDAEDYPDLREALDKLRLNDAALRFEPESSEAMGFGFRCGFLGMLHMEIVQERLEREYNLDLISTAPTVVYEVLKTDGTVINMDNPAKLPQLNLVQEIREPIIRANVLTPEEYIGNIIKLCEEKRGTQIGINYLGSQVQISYELPMAEVVLDFFDKLKSVSRGYASLDYHFVRFDAGPFVRVDVLINGDKVDALSLIVHRGHADRRGRELCEKMKDLIPRQMFDVAIQAAIGSQIISRSTVKAMRKNVLAKCYGGDVSRKKKLLEKQKEGKKRMKQVGRVEIPQEAFLAVLQMDK</sequence>
<protein>
    <recommendedName>
        <fullName evidence="1">Elongation factor 4</fullName>
        <shortName evidence="1">EF-4</shortName>
        <ecNumber evidence="1">3.6.5.n1</ecNumber>
    </recommendedName>
    <alternativeName>
        <fullName evidence="1">Ribosomal back-translocase LepA</fullName>
    </alternativeName>
</protein>
<dbReference type="EC" id="3.6.5.n1" evidence="1"/>
<dbReference type="EMBL" id="AE008923">
    <property type="protein sequence ID" value="AAM36193.1"/>
    <property type="molecule type" value="Genomic_DNA"/>
</dbReference>
<dbReference type="SMR" id="Q8PMV3"/>
<dbReference type="KEGG" id="xac:XAC1322"/>
<dbReference type="eggNOG" id="COG0481">
    <property type="taxonomic scope" value="Bacteria"/>
</dbReference>
<dbReference type="HOGENOM" id="CLU_009995_3_3_6"/>
<dbReference type="Proteomes" id="UP000000576">
    <property type="component" value="Chromosome"/>
</dbReference>
<dbReference type="GO" id="GO:0005886">
    <property type="term" value="C:plasma membrane"/>
    <property type="evidence" value="ECO:0007669"/>
    <property type="project" value="UniProtKB-SubCell"/>
</dbReference>
<dbReference type="GO" id="GO:0005525">
    <property type="term" value="F:GTP binding"/>
    <property type="evidence" value="ECO:0007669"/>
    <property type="project" value="UniProtKB-UniRule"/>
</dbReference>
<dbReference type="GO" id="GO:0003924">
    <property type="term" value="F:GTPase activity"/>
    <property type="evidence" value="ECO:0007669"/>
    <property type="project" value="UniProtKB-UniRule"/>
</dbReference>
<dbReference type="GO" id="GO:0097216">
    <property type="term" value="F:guanosine tetraphosphate binding"/>
    <property type="evidence" value="ECO:0007669"/>
    <property type="project" value="UniProtKB-ARBA"/>
</dbReference>
<dbReference type="GO" id="GO:0043022">
    <property type="term" value="F:ribosome binding"/>
    <property type="evidence" value="ECO:0007669"/>
    <property type="project" value="UniProtKB-UniRule"/>
</dbReference>
<dbReference type="GO" id="GO:0003746">
    <property type="term" value="F:translation elongation factor activity"/>
    <property type="evidence" value="ECO:0007669"/>
    <property type="project" value="UniProtKB-UniRule"/>
</dbReference>
<dbReference type="GO" id="GO:0045727">
    <property type="term" value="P:positive regulation of translation"/>
    <property type="evidence" value="ECO:0007669"/>
    <property type="project" value="UniProtKB-UniRule"/>
</dbReference>
<dbReference type="CDD" id="cd03699">
    <property type="entry name" value="EF4_II"/>
    <property type="match status" value="1"/>
</dbReference>
<dbReference type="CDD" id="cd16260">
    <property type="entry name" value="EF4_III"/>
    <property type="match status" value="1"/>
</dbReference>
<dbReference type="CDD" id="cd01890">
    <property type="entry name" value="LepA"/>
    <property type="match status" value="1"/>
</dbReference>
<dbReference type="CDD" id="cd03709">
    <property type="entry name" value="lepA_C"/>
    <property type="match status" value="1"/>
</dbReference>
<dbReference type="FunFam" id="3.40.50.300:FF:000078">
    <property type="entry name" value="Elongation factor 4"/>
    <property type="match status" value="1"/>
</dbReference>
<dbReference type="FunFam" id="2.40.30.10:FF:000015">
    <property type="entry name" value="Translation factor GUF1, mitochondrial"/>
    <property type="match status" value="1"/>
</dbReference>
<dbReference type="FunFam" id="3.30.70.240:FF:000007">
    <property type="entry name" value="Translation factor GUF1, mitochondrial"/>
    <property type="match status" value="1"/>
</dbReference>
<dbReference type="FunFam" id="3.30.70.2570:FF:000001">
    <property type="entry name" value="Translation factor GUF1, mitochondrial"/>
    <property type="match status" value="1"/>
</dbReference>
<dbReference type="FunFam" id="3.30.70.870:FF:000004">
    <property type="entry name" value="Translation factor GUF1, mitochondrial"/>
    <property type="match status" value="1"/>
</dbReference>
<dbReference type="Gene3D" id="3.30.70.240">
    <property type="match status" value="1"/>
</dbReference>
<dbReference type="Gene3D" id="3.30.70.2570">
    <property type="entry name" value="Elongation factor 4, C-terminal domain"/>
    <property type="match status" value="1"/>
</dbReference>
<dbReference type="Gene3D" id="3.30.70.870">
    <property type="entry name" value="Elongation Factor G (Translational Gtpase), domain 3"/>
    <property type="match status" value="1"/>
</dbReference>
<dbReference type="Gene3D" id="3.40.50.300">
    <property type="entry name" value="P-loop containing nucleotide triphosphate hydrolases"/>
    <property type="match status" value="1"/>
</dbReference>
<dbReference type="Gene3D" id="2.40.30.10">
    <property type="entry name" value="Translation factors"/>
    <property type="match status" value="1"/>
</dbReference>
<dbReference type="HAMAP" id="MF_00071">
    <property type="entry name" value="LepA"/>
    <property type="match status" value="1"/>
</dbReference>
<dbReference type="InterPro" id="IPR006297">
    <property type="entry name" value="EF-4"/>
</dbReference>
<dbReference type="InterPro" id="IPR035647">
    <property type="entry name" value="EFG_III/V"/>
</dbReference>
<dbReference type="InterPro" id="IPR000640">
    <property type="entry name" value="EFG_V-like"/>
</dbReference>
<dbReference type="InterPro" id="IPR004161">
    <property type="entry name" value="EFTu-like_2"/>
</dbReference>
<dbReference type="InterPro" id="IPR031157">
    <property type="entry name" value="G_TR_CS"/>
</dbReference>
<dbReference type="InterPro" id="IPR038363">
    <property type="entry name" value="LepA_C_sf"/>
</dbReference>
<dbReference type="InterPro" id="IPR013842">
    <property type="entry name" value="LepA_CTD"/>
</dbReference>
<dbReference type="InterPro" id="IPR035654">
    <property type="entry name" value="LepA_IV"/>
</dbReference>
<dbReference type="InterPro" id="IPR027417">
    <property type="entry name" value="P-loop_NTPase"/>
</dbReference>
<dbReference type="InterPro" id="IPR005225">
    <property type="entry name" value="Small_GTP-bd"/>
</dbReference>
<dbReference type="InterPro" id="IPR000795">
    <property type="entry name" value="T_Tr_GTP-bd_dom"/>
</dbReference>
<dbReference type="NCBIfam" id="TIGR01393">
    <property type="entry name" value="lepA"/>
    <property type="match status" value="1"/>
</dbReference>
<dbReference type="NCBIfam" id="TIGR00231">
    <property type="entry name" value="small_GTP"/>
    <property type="match status" value="1"/>
</dbReference>
<dbReference type="PANTHER" id="PTHR43512:SF4">
    <property type="entry name" value="TRANSLATION FACTOR GUF1 HOMOLOG, CHLOROPLASTIC"/>
    <property type="match status" value="1"/>
</dbReference>
<dbReference type="PANTHER" id="PTHR43512">
    <property type="entry name" value="TRANSLATION FACTOR GUF1-RELATED"/>
    <property type="match status" value="1"/>
</dbReference>
<dbReference type="Pfam" id="PF00679">
    <property type="entry name" value="EFG_C"/>
    <property type="match status" value="1"/>
</dbReference>
<dbReference type="Pfam" id="PF00009">
    <property type="entry name" value="GTP_EFTU"/>
    <property type="match status" value="1"/>
</dbReference>
<dbReference type="Pfam" id="PF03144">
    <property type="entry name" value="GTP_EFTU_D2"/>
    <property type="match status" value="1"/>
</dbReference>
<dbReference type="Pfam" id="PF06421">
    <property type="entry name" value="LepA_C"/>
    <property type="match status" value="1"/>
</dbReference>
<dbReference type="PRINTS" id="PR00315">
    <property type="entry name" value="ELONGATNFCT"/>
</dbReference>
<dbReference type="SMART" id="SM00838">
    <property type="entry name" value="EFG_C"/>
    <property type="match status" value="1"/>
</dbReference>
<dbReference type="SUPFAM" id="SSF54980">
    <property type="entry name" value="EF-G C-terminal domain-like"/>
    <property type="match status" value="2"/>
</dbReference>
<dbReference type="SUPFAM" id="SSF52540">
    <property type="entry name" value="P-loop containing nucleoside triphosphate hydrolases"/>
    <property type="match status" value="1"/>
</dbReference>
<dbReference type="PROSITE" id="PS00301">
    <property type="entry name" value="G_TR_1"/>
    <property type="match status" value="1"/>
</dbReference>
<dbReference type="PROSITE" id="PS51722">
    <property type="entry name" value="G_TR_2"/>
    <property type="match status" value="1"/>
</dbReference>
<name>LEPA_XANAC</name>
<gene>
    <name evidence="1" type="primary">lepA</name>
    <name type="ordered locus">XAC1322</name>
</gene>
<comment type="function">
    <text evidence="1">Required for accurate and efficient protein synthesis under certain stress conditions. May act as a fidelity factor of the translation reaction, by catalyzing a one-codon backward translocation of tRNAs on improperly translocated ribosomes. Back-translocation proceeds from a post-translocation (POST) complex to a pre-translocation (PRE) complex, thus giving elongation factor G a second chance to translocate the tRNAs correctly. Binds to ribosomes in a GTP-dependent manner.</text>
</comment>
<comment type="catalytic activity">
    <reaction evidence="1">
        <text>GTP + H2O = GDP + phosphate + H(+)</text>
        <dbReference type="Rhea" id="RHEA:19669"/>
        <dbReference type="ChEBI" id="CHEBI:15377"/>
        <dbReference type="ChEBI" id="CHEBI:15378"/>
        <dbReference type="ChEBI" id="CHEBI:37565"/>
        <dbReference type="ChEBI" id="CHEBI:43474"/>
        <dbReference type="ChEBI" id="CHEBI:58189"/>
        <dbReference type="EC" id="3.6.5.n1"/>
    </reaction>
</comment>
<comment type="subcellular location">
    <subcellularLocation>
        <location evidence="1">Cell inner membrane</location>
        <topology evidence="1">Peripheral membrane protein</topology>
        <orientation evidence="1">Cytoplasmic side</orientation>
    </subcellularLocation>
</comment>
<comment type="similarity">
    <text evidence="1">Belongs to the TRAFAC class translation factor GTPase superfamily. Classic translation factor GTPase family. LepA subfamily.</text>
</comment>
<keyword id="KW-0997">Cell inner membrane</keyword>
<keyword id="KW-1003">Cell membrane</keyword>
<keyword id="KW-0342">GTP-binding</keyword>
<keyword id="KW-0378">Hydrolase</keyword>
<keyword id="KW-0472">Membrane</keyword>
<keyword id="KW-0547">Nucleotide-binding</keyword>
<keyword id="KW-0648">Protein biosynthesis</keyword>
<evidence type="ECO:0000255" key="1">
    <source>
        <dbReference type="HAMAP-Rule" id="MF_00071"/>
    </source>
</evidence>
<reference key="1">
    <citation type="journal article" date="2002" name="Nature">
        <title>Comparison of the genomes of two Xanthomonas pathogens with differing host specificities.</title>
        <authorList>
            <person name="da Silva A.C.R."/>
            <person name="Ferro J.A."/>
            <person name="Reinach F.C."/>
            <person name="Farah C.S."/>
            <person name="Furlan L.R."/>
            <person name="Quaggio R.B."/>
            <person name="Monteiro-Vitorello C.B."/>
            <person name="Van Sluys M.A."/>
            <person name="Almeida N.F. Jr."/>
            <person name="Alves L.M.C."/>
            <person name="do Amaral A.M."/>
            <person name="Bertolini M.C."/>
            <person name="Camargo L.E.A."/>
            <person name="Camarotte G."/>
            <person name="Cannavan F."/>
            <person name="Cardozo J."/>
            <person name="Chambergo F."/>
            <person name="Ciapina L.P."/>
            <person name="Cicarelli R.M.B."/>
            <person name="Coutinho L.L."/>
            <person name="Cursino-Santos J.R."/>
            <person name="El-Dorry H."/>
            <person name="Faria J.B."/>
            <person name="Ferreira A.J.S."/>
            <person name="Ferreira R.C.C."/>
            <person name="Ferro M.I.T."/>
            <person name="Formighieri E.F."/>
            <person name="Franco M.C."/>
            <person name="Greggio C.C."/>
            <person name="Gruber A."/>
            <person name="Katsuyama A.M."/>
            <person name="Kishi L.T."/>
            <person name="Leite R.P."/>
            <person name="Lemos E.G.M."/>
            <person name="Lemos M.V.F."/>
            <person name="Locali E.C."/>
            <person name="Machado M.A."/>
            <person name="Madeira A.M.B.N."/>
            <person name="Martinez-Rossi N.M."/>
            <person name="Martins E.C."/>
            <person name="Meidanis J."/>
            <person name="Menck C.F.M."/>
            <person name="Miyaki C.Y."/>
            <person name="Moon D.H."/>
            <person name="Moreira L.M."/>
            <person name="Novo M.T.M."/>
            <person name="Okura V.K."/>
            <person name="Oliveira M.C."/>
            <person name="Oliveira V.R."/>
            <person name="Pereira H.A."/>
            <person name="Rossi A."/>
            <person name="Sena J.A.D."/>
            <person name="Silva C."/>
            <person name="de Souza R.F."/>
            <person name="Spinola L.A.F."/>
            <person name="Takita M.A."/>
            <person name="Tamura R.E."/>
            <person name="Teixeira E.C."/>
            <person name="Tezza R.I.D."/>
            <person name="Trindade dos Santos M."/>
            <person name="Truffi D."/>
            <person name="Tsai S.M."/>
            <person name="White F.F."/>
            <person name="Setubal J.C."/>
            <person name="Kitajima J.P."/>
        </authorList>
    </citation>
    <scope>NUCLEOTIDE SEQUENCE [LARGE SCALE GENOMIC DNA]</scope>
    <source>
        <strain>306</strain>
    </source>
</reference>
<organism>
    <name type="scientific">Xanthomonas axonopodis pv. citri (strain 306)</name>
    <dbReference type="NCBI Taxonomy" id="190486"/>
    <lineage>
        <taxon>Bacteria</taxon>
        <taxon>Pseudomonadati</taxon>
        <taxon>Pseudomonadota</taxon>
        <taxon>Gammaproteobacteria</taxon>
        <taxon>Lysobacterales</taxon>
        <taxon>Lysobacteraceae</taxon>
        <taxon>Xanthomonas</taxon>
    </lineage>
</organism>